<dbReference type="EMBL" id="CP000082">
    <property type="protein sequence ID" value="AAZ19310.1"/>
    <property type="molecule type" value="Genomic_DNA"/>
</dbReference>
<dbReference type="SMR" id="Q4FRP8"/>
<dbReference type="STRING" id="259536.Psyc_1462"/>
<dbReference type="KEGG" id="par:Psyc_1462"/>
<dbReference type="eggNOG" id="COG1551">
    <property type="taxonomic scope" value="Bacteria"/>
</dbReference>
<dbReference type="HOGENOM" id="CLU_164837_2_1_6"/>
<dbReference type="OrthoDB" id="9809061at2"/>
<dbReference type="Proteomes" id="UP000000546">
    <property type="component" value="Chromosome"/>
</dbReference>
<dbReference type="GO" id="GO:0005829">
    <property type="term" value="C:cytosol"/>
    <property type="evidence" value="ECO:0007669"/>
    <property type="project" value="TreeGrafter"/>
</dbReference>
<dbReference type="GO" id="GO:0048027">
    <property type="term" value="F:mRNA 5'-UTR binding"/>
    <property type="evidence" value="ECO:0007669"/>
    <property type="project" value="UniProtKB-UniRule"/>
</dbReference>
<dbReference type="GO" id="GO:0006402">
    <property type="term" value="P:mRNA catabolic process"/>
    <property type="evidence" value="ECO:0007669"/>
    <property type="project" value="InterPro"/>
</dbReference>
<dbReference type="GO" id="GO:0045947">
    <property type="term" value="P:negative regulation of translational initiation"/>
    <property type="evidence" value="ECO:0007669"/>
    <property type="project" value="UniProtKB-UniRule"/>
</dbReference>
<dbReference type="GO" id="GO:0045948">
    <property type="term" value="P:positive regulation of translational initiation"/>
    <property type="evidence" value="ECO:0007669"/>
    <property type="project" value="UniProtKB-UniRule"/>
</dbReference>
<dbReference type="GO" id="GO:0006109">
    <property type="term" value="P:regulation of carbohydrate metabolic process"/>
    <property type="evidence" value="ECO:0007669"/>
    <property type="project" value="UniProtKB-UniRule"/>
</dbReference>
<dbReference type="FunFam" id="2.60.40.4380:FF:000001">
    <property type="entry name" value="Translational regulator CsrA"/>
    <property type="match status" value="1"/>
</dbReference>
<dbReference type="Gene3D" id="2.60.40.4380">
    <property type="entry name" value="Translational regulator CsrA"/>
    <property type="match status" value="1"/>
</dbReference>
<dbReference type="HAMAP" id="MF_00167">
    <property type="entry name" value="CsrA"/>
    <property type="match status" value="1"/>
</dbReference>
<dbReference type="InterPro" id="IPR003751">
    <property type="entry name" value="CsrA"/>
</dbReference>
<dbReference type="InterPro" id="IPR036107">
    <property type="entry name" value="CsrA_sf"/>
</dbReference>
<dbReference type="NCBIfam" id="TIGR00202">
    <property type="entry name" value="csrA"/>
    <property type="match status" value="1"/>
</dbReference>
<dbReference type="NCBIfam" id="NF002469">
    <property type="entry name" value="PRK01712.1"/>
    <property type="match status" value="1"/>
</dbReference>
<dbReference type="PANTHER" id="PTHR34984">
    <property type="entry name" value="CARBON STORAGE REGULATOR"/>
    <property type="match status" value="1"/>
</dbReference>
<dbReference type="PANTHER" id="PTHR34984:SF1">
    <property type="entry name" value="CARBON STORAGE REGULATOR"/>
    <property type="match status" value="1"/>
</dbReference>
<dbReference type="Pfam" id="PF02599">
    <property type="entry name" value="CsrA"/>
    <property type="match status" value="1"/>
</dbReference>
<dbReference type="SUPFAM" id="SSF117130">
    <property type="entry name" value="CsrA-like"/>
    <property type="match status" value="1"/>
</dbReference>
<evidence type="ECO:0000255" key="1">
    <source>
        <dbReference type="HAMAP-Rule" id="MF_00167"/>
    </source>
</evidence>
<evidence type="ECO:0000256" key="2">
    <source>
        <dbReference type="SAM" id="MobiDB-lite"/>
    </source>
</evidence>
<name>CSRA_PSYA2</name>
<comment type="function">
    <text evidence="1">A key translational regulator that binds mRNA to regulate translation initiation and/or mRNA stability. Mediates global changes in gene expression, shifting from rapid growth to stress survival by linking envelope stress, the stringent response and the catabolite repression systems. Usually binds in the 5'-UTR; binding at or near the Shine-Dalgarno sequence prevents ribosome-binding, repressing translation, binding elsewhere in the 5'-UTR can activate translation and/or stabilize the mRNA. Its function is antagonized by small RNA(s).</text>
</comment>
<comment type="subunit">
    <text evidence="1">Homodimer; the beta-strands of each monomer intercalate to form a hydrophobic core, while the alpha-helices form wings that extend away from the core.</text>
</comment>
<comment type="subcellular location">
    <subcellularLocation>
        <location evidence="1">Cytoplasm</location>
    </subcellularLocation>
</comment>
<comment type="similarity">
    <text evidence="1">Belongs to the CsrA/RsmA family.</text>
</comment>
<organism>
    <name type="scientific">Psychrobacter arcticus (strain DSM 17307 / VKM B-2377 / 273-4)</name>
    <dbReference type="NCBI Taxonomy" id="259536"/>
    <lineage>
        <taxon>Bacteria</taxon>
        <taxon>Pseudomonadati</taxon>
        <taxon>Pseudomonadota</taxon>
        <taxon>Gammaproteobacteria</taxon>
        <taxon>Moraxellales</taxon>
        <taxon>Moraxellaceae</taxon>
        <taxon>Psychrobacter</taxon>
    </lineage>
</organism>
<reference key="1">
    <citation type="journal article" date="2010" name="Appl. Environ. Microbiol.">
        <title>The genome sequence of Psychrobacter arcticus 273-4, a psychroactive Siberian permafrost bacterium, reveals mechanisms for adaptation to low-temperature growth.</title>
        <authorList>
            <person name="Ayala-del-Rio H.L."/>
            <person name="Chain P.S."/>
            <person name="Grzymski J.J."/>
            <person name="Ponder M.A."/>
            <person name="Ivanova N."/>
            <person name="Bergholz P.W."/>
            <person name="Di Bartolo G."/>
            <person name="Hauser L."/>
            <person name="Land M."/>
            <person name="Bakermans C."/>
            <person name="Rodrigues D."/>
            <person name="Klappenbach J."/>
            <person name="Zarka D."/>
            <person name="Larimer F."/>
            <person name="Richardson P."/>
            <person name="Murray A."/>
            <person name="Thomashow M."/>
            <person name="Tiedje J.M."/>
        </authorList>
    </citation>
    <scope>NUCLEOTIDE SEQUENCE [LARGE SCALE GENOMIC DNA]</scope>
    <source>
        <strain>DSM 17307 / VKM B-2377 / 273-4</strain>
    </source>
</reference>
<sequence length="81" mass="9314">MLILTRRVGETLMIGDEVSVTVLGVKGNQVRIGVDAPKDIAVHREEIYQRIQHERTIQSQMQHLEQGSFAPSFDDEDYFNR</sequence>
<accession>Q4FRP8</accession>
<gene>
    <name evidence="1" type="primary">csrA</name>
    <name type="ordered locus">Psyc_1462</name>
</gene>
<protein>
    <recommendedName>
        <fullName evidence="1">Translational regulator CsrA</fullName>
    </recommendedName>
    <alternativeName>
        <fullName evidence="1">Carbon storage regulator</fullName>
    </alternativeName>
</protein>
<keyword id="KW-0010">Activator</keyword>
<keyword id="KW-0963">Cytoplasm</keyword>
<keyword id="KW-1185">Reference proteome</keyword>
<keyword id="KW-0678">Repressor</keyword>
<keyword id="KW-0694">RNA-binding</keyword>
<keyword id="KW-0810">Translation regulation</keyword>
<proteinExistence type="inferred from homology"/>
<feature type="chain" id="PRO_1000023409" description="Translational regulator CsrA">
    <location>
        <begin position="1"/>
        <end position="81"/>
    </location>
</feature>
<feature type="region of interest" description="Disordered" evidence="2">
    <location>
        <begin position="60"/>
        <end position="81"/>
    </location>
</feature>